<gene>
    <name evidence="6" type="primary">mbhJ</name>
    <name evidence="5" type="synonym">mbh10</name>
    <name type="ordered locus">PF1432</name>
</gene>
<keyword id="KW-0002">3D-structure</keyword>
<keyword id="KW-0004">4Fe-4S</keyword>
<keyword id="KW-1003">Cell membrane</keyword>
<keyword id="KW-0408">Iron</keyword>
<keyword id="KW-0411">Iron-sulfur</keyword>
<keyword id="KW-0472">Membrane</keyword>
<keyword id="KW-0479">Metal-binding</keyword>
<keyword id="KW-0560">Oxidoreductase</keyword>
<keyword id="KW-1185">Reference proteome</keyword>
<organism>
    <name type="scientific">Pyrococcus furiosus (strain ATCC 43587 / DSM 3638 / JCM 8422 / Vc1)</name>
    <dbReference type="NCBI Taxonomy" id="186497"/>
    <lineage>
        <taxon>Archaea</taxon>
        <taxon>Methanobacteriati</taxon>
        <taxon>Methanobacteriota</taxon>
        <taxon>Thermococci</taxon>
        <taxon>Thermococcales</taxon>
        <taxon>Thermococcaceae</taxon>
        <taxon>Pyrococcus</taxon>
    </lineage>
</organism>
<evidence type="ECO:0000250" key="1">
    <source>
        <dbReference type="UniProtKB" id="P21853"/>
    </source>
</evidence>
<evidence type="ECO:0000269" key="2">
    <source>
    </source>
</evidence>
<evidence type="ECO:0000269" key="3">
    <source>
    </source>
</evidence>
<evidence type="ECO:0000269" key="4">
    <source>
    </source>
</evidence>
<evidence type="ECO:0000303" key="5">
    <source>
    </source>
</evidence>
<evidence type="ECO:0000303" key="6">
    <source>
    </source>
</evidence>
<evidence type="ECO:0000305" key="7"/>
<evidence type="ECO:0000305" key="8">
    <source>
    </source>
</evidence>
<evidence type="ECO:0000305" key="9">
    <source>
    </source>
</evidence>
<evidence type="ECO:0000312" key="10">
    <source>
        <dbReference type="EMBL" id="AAL81556.1"/>
    </source>
</evidence>
<sequence>MTNNSERKRLEKRIAQLCKFIGRSPWVFHVNSGSCNGCDIEIIAALTPRYDAERFGVKLVGSPRHADILLVTGPVTNQSLERVKLVYEQTPDPKIVIAIGACPTGGSVFYESPFTNAPLDRIIPVDVFVPGCPPRPEAILHGVVLALEKLAKMIKGEVPPEEGEENE</sequence>
<accession>Q8U0Z8</accession>
<name>MBHJ_PYRFU</name>
<reference evidence="10" key="1">
    <citation type="journal article" date="1999" name="Genetics">
        <title>Divergence of the hyperthermophilic archaea Pyrococcus furiosus and P. horikoshii inferred from complete genomic sequences.</title>
        <authorList>
            <person name="Maeder D.L."/>
            <person name="Weiss R.B."/>
            <person name="Dunn D.M."/>
            <person name="Cherry J.L."/>
            <person name="Gonzalez J.M."/>
            <person name="DiRuggiero J."/>
            <person name="Robb F.T."/>
        </authorList>
    </citation>
    <scope>NUCLEOTIDE SEQUENCE [LARGE SCALE GENOMIC DNA]</scope>
    <source>
        <strain>ATCC 43587 / DSM 3638 / JCM 8422 / Vc1</strain>
    </source>
</reference>
<reference evidence="7" key="2">
    <citation type="journal article" date="2000" name="Eur. J. Biochem.">
        <title>Enzymes of hydrogen metabolism in Pyrococcus furiosus.</title>
        <authorList>
            <person name="Silva P.J."/>
            <person name="van den Ban E.C."/>
            <person name="Wassink H."/>
            <person name="Haaker H."/>
            <person name="de Castro B."/>
            <person name="Robb F.T."/>
            <person name="Hagen W.R."/>
        </authorList>
    </citation>
    <scope>FUNCTION</scope>
    <scope>CATALYTIC ACTIVITY</scope>
    <scope>BIOPHYSICOCHEMICAL PROPERTIES</scope>
    <scope>SUBCELLULAR LOCATION</scope>
    <scope>EPR SPECTROSCOPY</scope>
    <source>
        <strain evidence="3">ATCC 43587 / DSM 3638 / JCM 8422 / Vc1</strain>
    </source>
</reference>
<reference evidence="7" key="3">
    <citation type="journal article" date="2000" name="J. Bacteriol.">
        <title>Purification and characterization of a membrane-bound hydrogenase from the hyperthermophilic archaeon Pyrococcus furiosus.</title>
        <authorList>
            <person name="Sapra R."/>
            <person name="Verhagen M.F."/>
            <person name="Adams M.W."/>
        </authorList>
    </citation>
    <scope>FUNCTION</scope>
    <scope>CATALYTIC ACTIVITY</scope>
    <scope>COFACTOR</scope>
    <scope>BIOPHYSICOCHEMICAL PROPERTIES</scope>
    <scope>SUBUNIT</scope>
    <scope>SUBCELLULAR LOCATION</scope>
    <scope>EPR SPECTROSCOPY</scope>
    <source>
        <strain evidence="2">ATCC 43587 / DSM 3638 / JCM 8422 / Vc1</strain>
    </source>
</reference>
<reference evidence="7" key="4">
    <citation type="journal article" date="2003" name="Proc. Natl. Acad. Sci. U.S.A.">
        <title>A simple energy-conserving system: proton reduction coupled to proton translocation.</title>
        <authorList>
            <person name="Sapra R."/>
            <person name="Bagramyan K."/>
            <person name="Adams M.W."/>
        </authorList>
    </citation>
    <scope>FUNCTION</scope>
    <scope>CATALYTIC ACTIVITY</scope>
    <scope>ACTIVITY REGULATION</scope>
    <source>
        <strain evidence="4">ATCC 43587 / DSM 3638 / JCM 8422 / Vc1</strain>
    </source>
</reference>
<comment type="function">
    <text evidence="2 3 4">Probable subunit of a hydrogen-evolving hydrogenase that utilizes protons both as a substrate for hydrogen production and proton translocation. Acts by coupling the redox reaction via ferredoxin and iron-sulfur (Fe-S) clusters to proton translocation across the membrane, thereby conserving the redox energy in a proton gradient.</text>
</comment>
<comment type="catalytic activity">
    <reaction evidence="2 3 4">
        <text>H2 + 2 oxidized [2Fe-2S]-[ferredoxin] = 2 reduced [2Fe-2S]-[ferredoxin] + 2 H(+)</text>
        <dbReference type="Rhea" id="RHEA:17445"/>
        <dbReference type="Rhea" id="RHEA-COMP:10000"/>
        <dbReference type="Rhea" id="RHEA-COMP:10001"/>
        <dbReference type="ChEBI" id="CHEBI:15378"/>
        <dbReference type="ChEBI" id="CHEBI:18276"/>
        <dbReference type="ChEBI" id="CHEBI:33737"/>
        <dbReference type="ChEBI" id="CHEBI:33738"/>
        <dbReference type="EC" id="1.12.7.2"/>
    </reaction>
</comment>
<comment type="cofactor">
    <cofactor evidence="2">
        <name>[4Fe-4S] cluster</name>
        <dbReference type="ChEBI" id="CHEBI:49883"/>
    </cofactor>
    <text evidence="2">Binds 1 [4Fe-4S] cluster.</text>
</comment>
<comment type="activity regulation">
    <text evidence="4">Inhibited by 0.1 mM Cu(2+).</text>
</comment>
<comment type="biophysicochemical properties">
    <kinetics>
        <KM evidence="2 3">36 uM for ferredoxin</KM>
        <text evidence="3">Measured for the whole complex.</text>
    </kinetics>
    <phDependence>
        <text evidence="2 3">Optimum pH is 7.0. Active between pH 6.0-8.5.</text>
    </phDependence>
    <temperatureDependence>
        <text evidence="2 3">Optimum temperature is 90 degrees Celsius for membrane-bound enzyme but 80 degrees Celsius for the purified enzyme. Membrane-bound enzyme has a half-life of 2h at 100 degrees Celsius whereas the half-life of the purified enzyme is 30 minutes at 100 degrees Celsius.</text>
    </temperatureDependence>
</comment>
<comment type="subunit">
    <text evidence="2">The membrane-bound hydrogenase complex is composed of MbhK and MbhL, but may also contain MbhJ.</text>
</comment>
<comment type="subcellular location">
    <subcellularLocation>
        <location evidence="2 3">Cell membrane</location>
    </subcellularLocation>
</comment>
<comment type="similarity">
    <text evidence="7">Belongs to the complex I 20 kDa subunit family.</text>
</comment>
<comment type="caution">
    <text evidence="8 9">The subunit composition of membrane-bound hydrogenase complex is currently unclear. It has been shown to be a heterodimer of MbhK and MbhL (PubMed:10852873). Other studies have shown it to contain MbhJ in addition to MbhK and MbhL (PubMed:11054105).</text>
</comment>
<protein>
    <recommendedName>
        <fullName evidence="5">Probable membrane-bound hydrogenase subunit mbhJ</fullName>
        <ecNumber evidence="2">1.12.7.2</ecNumber>
    </recommendedName>
</protein>
<feature type="chain" id="PRO_0000420790" description="Probable membrane-bound hydrogenase subunit mbhJ">
    <location>
        <begin position="1"/>
        <end position="167"/>
    </location>
</feature>
<feature type="binding site" evidence="1">
    <location>
        <position position="35"/>
    </location>
    <ligand>
        <name>[4Fe-4S] cluster</name>
        <dbReference type="ChEBI" id="CHEBI:49883"/>
    </ligand>
</feature>
<feature type="binding site" evidence="1">
    <location>
        <position position="38"/>
    </location>
    <ligand>
        <name>[4Fe-4S] cluster</name>
        <dbReference type="ChEBI" id="CHEBI:49883"/>
    </ligand>
</feature>
<feature type="binding site" evidence="1">
    <location>
        <position position="102"/>
    </location>
    <ligand>
        <name>[4Fe-4S] cluster</name>
        <dbReference type="ChEBI" id="CHEBI:49883"/>
    </ligand>
</feature>
<feature type="binding site" evidence="1">
    <location>
        <position position="132"/>
    </location>
    <ligand>
        <name>[4Fe-4S] cluster</name>
        <dbReference type="ChEBI" id="CHEBI:49883"/>
    </ligand>
</feature>
<proteinExistence type="evidence at protein level"/>
<dbReference type="EC" id="1.12.7.2" evidence="2"/>
<dbReference type="EMBL" id="AE009950">
    <property type="protein sequence ID" value="AAL81556.1"/>
    <property type="molecule type" value="Genomic_DNA"/>
</dbReference>
<dbReference type="RefSeq" id="WP_011012579.1">
    <property type="nucleotide sequence ID" value="NZ_CP023154.1"/>
</dbReference>
<dbReference type="PDB" id="6CFW">
    <property type="method" value="EM"/>
    <property type="resolution" value="3.70 A"/>
    <property type="chains" value="J=1-167"/>
</dbReference>
<dbReference type="PDBsum" id="6CFW"/>
<dbReference type="EMDB" id="EMD-7468"/>
<dbReference type="SMR" id="Q8U0Z8"/>
<dbReference type="STRING" id="186497.PF1432"/>
<dbReference type="TCDB" id="3.D.1.4.1">
    <property type="family name" value="the h+ or na+-translocating nadh dehydrogenase (ndh) family"/>
</dbReference>
<dbReference type="PaxDb" id="186497-PF1432"/>
<dbReference type="KEGG" id="pfu:PF1432"/>
<dbReference type="PATRIC" id="fig|186497.12.peg.1494"/>
<dbReference type="eggNOG" id="arCOG01553">
    <property type="taxonomic scope" value="Archaea"/>
</dbReference>
<dbReference type="HOGENOM" id="CLU_055737_7_3_2"/>
<dbReference type="OrthoDB" id="5740at2157"/>
<dbReference type="PhylomeDB" id="Q8U0Z8"/>
<dbReference type="BRENDA" id="1.12.7.2">
    <property type="organism ID" value="5243"/>
</dbReference>
<dbReference type="Proteomes" id="UP000001013">
    <property type="component" value="Chromosome"/>
</dbReference>
<dbReference type="GO" id="GO:0009375">
    <property type="term" value="C:ferredoxin hydrogenase complex"/>
    <property type="evidence" value="ECO:0000314"/>
    <property type="project" value="UniProtKB"/>
</dbReference>
<dbReference type="GO" id="GO:0005886">
    <property type="term" value="C:plasma membrane"/>
    <property type="evidence" value="ECO:0007669"/>
    <property type="project" value="UniProtKB-SubCell"/>
</dbReference>
<dbReference type="GO" id="GO:0051539">
    <property type="term" value="F:4 iron, 4 sulfur cluster binding"/>
    <property type="evidence" value="ECO:0007669"/>
    <property type="project" value="UniProtKB-KW"/>
</dbReference>
<dbReference type="GO" id="GO:0008901">
    <property type="term" value="F:ferredoxin hydrogenase activity"/>
    <property type="evidence" value="ECO:0000314"/>
    <property type="project" value="UniProtKB"/>
</dbReference>
<dbReference type="GO" id="GO:0046872">
    <property type="term" value="F:metal ion binding"/>
    <property type="evidence" value="ECO:0007669"/>
    <property type="project" value="UniProtKB-KW"/>
</dbReference>
<dbReference type="GO" id="GO:0015986">
    <property type="term" value="P:proton motive force-driven ATP synthesis"/>
    <property type="evidence" value="ECO:0000314"/>
    <property type="project" value="UniProtKB"/>
</dbReference>
<dbReference type="Gene3D" id="3.40.50.12280">
    <property type="match status" value="1"/>
</dbReference>
<dbReference type="InterPro" id="IPR052375">
    <property type="entry name" value="Complex_I_20kDa-like"/>
</dbReference>
<dbReference type="InterPro" id="IPR006137">
    <property type="entry name" value="NADH_UbQ_OxRdtase-like_20kDa"/>
</dbReference>
<dbReference type="NCBIfam" id="NF005012">
    <property type="entry name" value="PRK06411.1"/>
    <property type="match status" value="1"/>
</dbReference>
<dbReference type="PANTHER" id="PTHR42989:SF1">
    <property type="entry name" value="FORMATE HYDROGENLYASE SUBUNIT 7-RELATED"/>
    <property type="match status" value="1"/>
</dbReference>
<dbReference type="PANTHER" id="PTHR42989">
    <property type="entry name" value="HYDROGENASE-4 COMPONENT I"/>
    <property type="match status" value="1"/>
</dbReference>
<dbReference type="Pfam" id="PF01058">
    <property type="entry name" value="Oxidored_q6"/>
    <property type="match status" value="1"/>
</dbReference>
<dbReference type="SUPFAM" id="SSF56770">
    <property type="entry name" value="HydA/Nqo6-like"/>
    <property type="match status" value="1"/>
</dbReference>